<proteinExistence type="evidence at protein level"/>
<dbReference type="EMBL" id="Y09393">
    <property type="protein sequence ID" value="CAA70562.1"/>
    <property type="molecule type" value="mRNA"/>
</dbReference>
<dbReference type="PDB" id="6GIJ">
    <property type="method" value="NMR"/>
    <property type="chains" value="A=45-59"/>
</dbReference>
<dbReference type="PDB" id="6GIL">
    <property type="method" value="NMR"/>
    <property type="chains" value="A=47-59"/>
</dbReference>
<dbReference type="PDBsum" id="6GIJ"/>
<dbReference type="PDBsum" id="6GIL"/>
<dbReference type="BMRB" id="P79874"/>
<dbReference type="SMR" id="P79874"/>
<dbReference type="TCDB" id="1.C.52.1.6">
    <property type="family name" value="the dermaseptin (dermaseptin) family"/>
</dbReference>
<dbReference type="GO" id="GO:0005576">
    <property type="term" value="C:extracellular region"/>
    <property type="evidence" value="ECO:0000314"/>
    <property type="project" value="UniProtKB"/>
</dbReference>
<dbReference type="GO" id="GO:0016020">
    <property type="term" value="C:membrane"/>
    <property type="evidence" value="ECO:0007669"/>
    <property type="project" value="UniProtKB-KW"/>
</dbReference>
<dbReference type="GO" id="GO:0044218">
    <property type="term" value="C:other organism cell membrane"/>
    <property type="evidence" value="ECO:0007669"/>
    <property type="project" value="UniProtKB-KW"/>
</dbReference>
<dbReference type="GO" id="GO:0008289">
    <property type="term" value="F:lipid binding"/>
    <property type="evidence" value="ECO:0007669"/>
    <property type="project" value="UniProtKB-KW"/>
</dbReference>
<dbReference type="GO" id="GO:0050832">
    <property type="term" value="P:defense response to fungus"/>
    <property type="evidence" value="ECO:0007669"/>
    <property type="project" value="UniProtKB-KW"/>
</dbReference>
<dbReference type="GO" id="GO:0050830">
    <property type="term" value="P:defense response to Gram-positive bacterium"/>
    <property type="evidence" value="ECO:0000314"/>
    <property type="project" value="UniProtKB"/>
</dbReference>
<dbReference type="GO" id="GO:0045087">
    <property type="term" value="P:innate immune response"/>
    <property type="evidence" value="ECO:0007669"/>
    <property type="project" value="UniProtKB-KW"/>
</dbReference>
<dbReference type="GO" id="GO:0031640">
    <property type="term" value="P:killing of cells of another organism"/>
    <property type="evidence" value="ECO:0007669"/>
    <property type="project" value="UniProtKB-KW"/>
</dbReference>
<dbReference type="GO" id="GO:0050688">
    <property type="term" value="P:regulation of defense response to virus"/>
    <property type="evidence" value="ECO:0007669"/>
    <property type="project" value="UniProtKB-KW"/>
</dbReference>
<dbReference type="InterPro" id="IPR004275">
    <property type="entry name" value="Frog_antimicrobial_propeptide"/>
</dbReference>
<dbReference type="Pfam" id="PF03032">
    <property type="entry name" value="FSAP_sig_propep"/>
    <property type="match status" value="1"/>
</dbReference>
<protein>
    <recommendedName>
        <fullName evidence="15 16">Temporin-1Tb</fullName>
        <shortName evidence="17">TB</shortName>
    </recommendedName>
    <alternativeName>
        <fullName evidence="14 17 19">Temporin-B</fullName>
    </alternativeName>
</protein>
<organism>
    <name type="scientific">Rana temporaria</name>
    <name type="common">European common frog</name>
    <dbReference type="NCBI Taxonomy" id="8407"/>
    <lineage>
        <taxon>Eukaryota</taxon>
        <taxon>Metazoa</taxon>
        <taxon>Chordata</taxon>
        <taxon>Craniata</taxon>
        <taxon>Vertebrata</taxon>
        <taxon>Euteleostomi</taxon>
        <taxon>Amphibia</taxon>
        <taxon>Batrachia</taxon>
        <taxon>Anura</taxon>
        <taxon>Neobatrachia</taxon>
        <taxon>Ranoidea</taxon>
        <taxon>Ranidae</taxon>
        <taxon>Rana</taxon>
        <taxon>Rana</taxon>
    </lineage>
</organism>
<evidence type="ECO:0000250" key="1">
    <source>
        <dbReference type="UniProtKB" id="P69019"/>
    </source>
</evidence>
<evidence type="ECO:0000255" key="2"/>
<evidence type="ECO:0000269" key="3">
    <source>
    </source>
</evidence>
<evidence type="ECO:0000269" key="4">
    <source>
    </source>
</evidence>
<evidence type="ECO:0000269" key="5">
    <source>
    </source>
</evidence>
<evidence type="ECO:0000269" key="6">
    <source>
    </source>
</evidence>
<evidence type="ECO:0000269" key="7">
    <source>
    </source>
</evidence>
<evidence type="ECO:0000269" key="8">
    <source>
    </source>
</evidence>
<evidence type="ECO:0000269" key="9">
    <source>
    </source>
</evidence>
<evidence type="ECO:0000269" key="10">
    <source>
    </source>
</evidence>
<evidence type="ECO:0000269" key="11">
    <source>
    </source>
</evidence>
<evidence type="ECO:0000269" key="12">
    <source>
    </source>
</evidence>
<evidence type="ECO:0000269" key="13">
    <source>
    </source>
</evidence>
<evidence type="ECO:0000303" key="14">
    <source>
    </source>
</evidence>
<evidence type="ECO:0000303" key="15">
    <source>
    </source>
</evidence>
<evidence type="ECO:0000303" key="16">
    <source>
    </source>
</evidence>
<evidence type="ECO:0000303" key="17">
    <source>
    </source>
</evidence>
<evidence type="ECO:0000303" key="18">
    <source>
    </source>
</evidence>
<evidence type="ECO:0000303" key="19">
    <source>
    </source>
</evidence>
<evidence type="ECO:0000305" key="20"/>
<evidence type="ECO:0000305" key="21">
    <source>
    </source>
</evidence>
<evidence type="ECO:0000305" key="22">
    <source>
    </source>
</evidence>
<evidence type="ECO:0000305" key="23">
    <source>
    </source>
</evidence>
<evidence type="ECO:0000305" key="24">
    <source>
    </source>
</evidence>
<evidence type="ECO:0000305" key="25">
    <source>
    </source>
</evidence>
<evidence type="ECO:0000305" key="26">
    <source>
    </source>
</evidence>
<evidence type="ECO:0000305" key="27">
    <source>
    </source>
</evidence>
<evidence type="ECO:0007829" key="28">
    <source>
        <dbReference type="PDB" id="6GIJ"/>
    </source>
</evidence>
<accession>P79874</accession>
<reference key="1">
    <citation type="journal article" date="1996" name="Eur. J. Biochem.">
        <title>Temporins, antimicrobial peptides from the European red frog Rana temporaria.</title>
        <authorList>
            <person name="Simmaco M."/>
            <person name="Mignogna G."/>
            <person name="Canofeni S."/>
            <person name="Miele R."/>
            <person name="Mangoni M.L."/>
            <person name="Barra D."/>
        </authorList>
    </citation>
    <scope>NUCLEOTIDE SEQUENCE [MRNA]</scope>
    <scope>PROTEIN SEQUENCE OF 47-59</scope>
    <scope>FUNCTION</scope>
    <scope>AMIDATION AT LEU-59</scope>
    <scope>SYNTHESIS OF 47-59</scope>
    <scope>SUBCELLULAR LOCATION</scope>
    <source>
        <tissue>Skin</tissue>
        <tissue>Skin secretion</tissue>
    </source>
</reference>
<reference key="2">
    <citation type="journal article" date="2021" name="Anal. Bioanal. Chem.">
        <title>Differentiation of Central Slovenian and Moscow populations of Rana temporaria frogs using peptide biomarkers of temporins family.</title>
        <authorList>
            <person name="Samgina T.Y."/>
            <person name="Vasileva I.D."/>
            <person name="Kovalev S.V."/>
            <person name="Trebse P."/>
            <person name="Torkar G."/>
            <person name="Surin A.K."/>
            <person name="Zubarev R.A."/>
            <person name="Lebedev A.T."/>
        </authorList>
    </citation>
    <scope>PROTEIN SEQUENCE OF 47-59</scope>
    <scope>IDENTIFICATION BY MASS SPECTROMETRY</scope>
    <scope>SUBCELLULAR LOCATION</scope>
    <scope>AMIDATION AT LEU-59</scope>
    <source>
        <tissue evidence="18">Skin secretion</tissue>
    </source>
</reference>
<reference key="3">
    <citation type="journal article" date="2000" name="Eur. J. Biochem.">
        <title>Structure-function relationships of temporins, small antimicrobial peptides from amphibian skin.</title>
        <authorList>
            <person name="Mangoni M.L."/>
            <person name="Rinaldi A.C."/>
            <person name="Di Giulio A."/>
            <person name="Mignogna G."/>
            <person name="Bozzi A."/>
            <person name="Barra D."/>
            <person name="Simmaco M."/>
        </authorList>
    </citation>
    <scope>FUNCTION</scope>
</reference>
<reference key="4">
    <citation type="journal article" date="2001" name="J. Pept. Res.">
        <title>Effects of temporins on molecular dynamics and membrane permeabilization in lipid vesicles.</title>
        <authorList>
            <person name="Rinaldi A.C."/>
            <person name="Di Giulio A."/>
            <person name="Liberi M."/>
            <person name="Gualtieri G."/>
            <person name="Oratore A."/>
            <person name="Bozzi A."/>
            <person name="Schinina M.E."/>
            <person name="Simmaco M."/>
        </authorList>
    </citation>
    <scope>FUNCTION</scope>
</reference>
<reference key="5">
    <citation type="journal article" date="2005" name="J. Biol. Chem.">
        <title>Temporins, small antimicrobial peptides with leishmanicidal activity.</title>
        <authorList>
            <person name="Mangoni M.L."/>
            <person name="Saugar J.M."/>
            <person name="Dellisanti M."/>
            <person name="Barra D."/>
            <person name="Simmaco M."/>
            <person name="Rivas L."/>
        </authorList>
    </citation>
    <scope>FUNCTION</scope>
</reference>
<reference key="6">
    <citation type="journal article" date="2006" name="J. Biol. Chem.">
        <title>A synergism between temporins toward Gram-negative bacteria overcomes resistance imposed by the lipopolysaccharide protective layer.</title>
        <authorList>
            <person name="Rosenfeld Y."/>
            <person name="Barra D."/>
            <person name="Simmaco M."/>
            <person name="Shai Y."/>
            <person name="Mangoni M.L."/>
        </authorList>
    </citation>
    <scope>FUNCTION</scope>
    <scope>SUBUNIT</scope>
</reference>
<reference key="7">
    <citation type="journal article" date="2014" name="Antimicrob. Agents Chemother.">
        <title>Temporins A and B stimulate migration of HaCaT keratinocytes and kill intracellular Staphylococcus aureus.</title>
        <authorList>
            <person name="Di Grazia A."/>
            <person name="Luca V."/>
            <person name="Segev-Zarko L.A."/>
            <person name="Shai Y."/>
            <person name="Mangoni M.L."/>
        </authorList>
    </citation>
    <scope>FUNCTION</scope>
    <scope>SUBCELLULAR LOCATION</scope>
    <scope>PHARMACEUTICAL</scope>
</reference>
<reference key="8">
    <citation type="journal article" date="2015" name="Molecules">
        <title>The role of phosphoglycans in the susceptibility of Leishmania mexicana to the temporin family of anti-microbial peptides.</title>
        <authorList>
            <person name="Eggimann G.A."/>
            <person name="Sweeney K."/>
            <person name="Bolt H.L."/>
            <person name="Rozatian N."/>
            <person name="Cobb S.L."/>
            <person name="Denny P.W."/>
        </authorList>
    </citation>
    <scope>FUNCTION</scope>
</reference>
<reference key="9">
    <citation type="journal article" date="2016" name="Biofouling">
        <title>Anti-biofilm properties of the antimicrobial peptide temporin 1Tb and its ability, in combination with EDTA, to eradicate Staphylococcus epidermidis biofilms on silicone catheters.</title>
        <authorList>
            <person name="Maisetta G."/>
            <person name="Grassi L."/>
            <person name="Di Luca M."/>
            <person name="Bombardelli S."/>
            <person name="Medici C."/>
            <person name="Brancatisano F.L."/>
            <person name="Esin S."/>
            <person name="Batoni G."/>
        </authorList>
    </citation>
    <scope>FUNCTION</scope>
    <scope>BIOTECHNOLOGY</scope>
</reference>
<reference key="10">
    <citation type="journal article" date="2017" name="Front. Chem.">
        <title>Analogs of the frog-skin antimicrobial peptide temporin 1Tb exhibit a wider spectrum of activity and a stronger antibiofilm potential as compared to the parental peptide.</title>
        <authorList>
            <person name="Grassi L."/>
            <person name="Maisetta G."/>
            <person name="Maccari G."/>
            <person name="Esin S."/>
            <person name="Batoni G."/>
        </authorList>
    </citation>
    <scope>FUNCTION</scope>
    <scope>MUTAGENESIS OF LEU-47; GLY-52; GLY-53 AND LEU-59</scope>
</reference>
<reference key="11">
    <citation type="journal article" date="2018" name="Antimicrob. Agents Chemother.">
        <title>The amphibian antimicrobial peptide temporin B inhibits in vitro herpes simplex virus 1 infection.</title>
        <authorList>
            <person name="Marcocci M.E."/>
            <person name="Amatore D."/>
            <person name="Villa S."/>
            <person name="Casciaro B."/>
            <person name="Aimola P."/>
            <person name="Franci G."/>
            <person name="Grieco P."/>
            <person name="Galdiero M."/>
            <person name="Palamara A.T."/>
            <person name="Mangoni M.L."/>
            <person name="Nencioni L."/>
        </authorList>
    </citation>
    <scope>FUNCTION AS ANTIVIRAL PEPTIDE</scope>
</reference>
<reference key="12">
    <citation type="journal article" date="2011" name="J. Biol. Chem.">
        <title>NMR structures and interactions of temporin-1Tl and temporin-1Tb with lipopolysaccharide micelles: mechanistic insights into outer membrane permeabilization and synergistic activity.</title>
        <authorList>
            <person name="Bhunia A."/>
            <person name="Saravanan R."/>
            <person name="Mohanram H."/>
            <person name="Mangoni M.L."/>
            <person name="Bhattacharjya S."/>
        </authorList>
    </citation>
    <scope>STRUCTURE BY NMR OF 47-59 IN COMPLEX WITH TEMPORIN-1TL IN LPS MICELLES</scope>
</reference>
<reference key="13">
    <citation type="journal article" date="2019" name="Sci. Rep.">
        <title>Minor sequence modifications in temporin B cause drastic changes in antibacterial potency and selectivity by fundamentally altering membrane activity.</title>
        <authorList>
            <person name="Manzo G."/>
            <person name="Ferguson P.M."/>
            <person name="Gustilo V.B."/>
            <person name="Hind C.K."/>
            <person name="Clifford M."/>
            <person name="Bui T.T."/>
            <person name="Drake A.F."/>
            <person name="Atkinson R.A."/>
            <person name="Sutton J.M."/>
            <person name="Batoni G."/>
            <person name="Lorenz C.D."/>
            <person name="Phoenix D.A."/>
            <person name="Mason A.J."/>
        </authorList>
    </citation>
    <scope>STRUCTURE BY NMR OF TEMPORIN-B AND ITS ANALOG TB_KKG6A IN SDS MICELLES</scope>
    <scope>SUBUNIT</scope>
    <scope>MUTAGENESIS OF LEU-47; GLY-52; GLY-53 AND LEU-59</scope>
</reference>
<feature type="signal peptide" evidence="2">
    <location>
        <begin position="1"/>
        <end position="22"/>
    </location>
</feature>
<feature type="propeptide" id="PRO_0000003471" evidence="27">
    <location>
        <begin position="23"/>
        <end position="44"/>
    </location>
</feature>
<feature type="peptide" id="PRO_0000003472" description="Temporin-1Tb" evidence="13">
    <location>
        <begin position="47"/>
        <end position="59"/>
    </location>
</feature>
<feature type="modified residue" description="Leucine amide" evidence="13">
    <location>
        <position position="59"/>
    </location>
</feature>
<feature type="mutagenesis site" description="In amidated TB_L1FK; increase in antimicrobial activity against Gram-positive and Gram-negative bacteria and against fungi, no change in inhibition of biofilm formation of both Gram-positive and Gram-negative bacteria, increase in bacteria spectrum of activity, no important change in penetration in membranes and peptide aggregation at their surface, and increase of hemolytic activity; when associated with N-53 DEL and 59-L-K-60." evidence="9 11">
    <original>L</original>
    <variation>F</variation>
    <location>
        <position position="47"/>
    </location>
</feature>
<feature type="mutagenesis site" description="In amidated TB_KKG6A; increase or loss (controversial depending on reference) of activity against Gram-positive bacteria, no change in activity against Gram-negative bacteria (except an increase of activity against A.baumanii and E.coli), and decrease in activity against fungi. Important increase in inhibition of biofilm formation of Gram-negative bacteria. Decrease in bacteria spectrum of activity. Important decrease of penetration into membranes, and decrease in peptide aggregation at membrane surface. Increase of hemolytic activity." evidence="9 11">
    <original>G</original>
    <variation>A</variation>
    <location>
        <position position="52"/>
    </location>
</feature>
<feature type="mutagenesis site" description="In amidated TB_L1FK; increase in antimicrobial activity against Gram-positive and Gram-negative bacteria and against fungi, no change in inhibition of biofilm formation of both Gram-positive and Gram-negative bacteria, increase in bacteria spectrum of activity, no important change in penetration in membranes and peptide aggregation at their surface, and increase of hemolytic activity; when associated with F-47 and 59-L-K-60." evidence="9 11">
    <location>
        <position position="53"/>
    </location>
</feature>
<feature type="mutagenesis site" description="In amidated TB_L1FK; increase in antimicrobial activity against Gram-positive and Gram-negative bacteria and against fungi, no change in inhibition of biofilm formation of both Gram-positive and Gram-negative bacteria, increase in bacteria spectrum of activity, no important change in penetration in membranes and peptide aggregation at their surface, and increase of hemolytic activity; when associated with F-47 and N-53 DEL." evidence="9 11">
    <original>L</original>
    <variation>LK</variation>
    <location>
        <position position="59"/>
    </location>
</feature>
<feature type="mutagenesis site" description="In amidated TB_KKG6A; increase or loss (controversial depending on reference) of activity against Gram-positive bacteria, no change in activity against Gram-negative bacteria (except an increase of activity against A.baumanii and E.coli), and decrease in activity against fungi. Important increase in inhibition of biofilm formation of Gram-negative bacteria. Decrease in bacteria spectrum of activity. Important decrease of penetration into membranes, and decrease in peptide aggregation at membrane surface. Increase of hemolytic activity." evidence="9 11">
    <original>L</original>
    <variation>LKK</variation>
    <location>
        <position position="59"/>
    </location>
</feature>
<feature type="helix" evidence="28">
    <location>
        <begin position="48"/>
        <end position="55"/>
    </location>
</feature>
<name>TPB_RANTE</name>
<sequence length="61" mass="7101">MFTLKKSLLLLFFLGTINLSLCEEERNAEEERRDEPDERDVQVEKRLLPIVGNLLKSLLGK</sequence>
<keyword id="KW-0002">3D-structure</keyword>
<keyword id="KW-0027">Amidation</keyword>
<keyword id="KW-0878">Amphibian defense peptide</keyword>
<keyword id="KW-0044">Antibiotic</keyword>
<keyword id="KW-0929">Antimicrobial</keyword>
<keyword id="KW-0930">Antiviral protein</keyword>
<keyword id="KW-0165">Cleavage on pair of basic residues</keyword>
<keyword id="KW-0903">Direct protein sequencing</keyword>
<keyword id="KW-0295">Fungicide</keyword>
<keyword id="KW-0391">Immunity</keyword>
<keyword id="KW-0399">Innate immunity</keyword>
<keyword id="KW-0446">Lipid-binding</keyword>
<keyword id="KW-0472">Membrane</keyword>
<keyword id="KW-0582">Pharmaceutical</keyword>
<keyword id="KW-0964">Secreted</keyword>
<keyword id="KW-0732">Signal</keyword>
<keyword id="KW-1266">Target cell cytoplasm</keyword>
<keyword id="KW-1052">Target cell membrane</keyword>
<keyword id="KW-1053">Target membrane</keyword>
<comment type="function">
    <text evidence="3 4 5 6 7 8 9 10 11 13 21 22">Amphipathic alpha-helical antimicrobial peptide with potent activity against Gram-positive bacteria, weak activity against Gram-negative bacteria, and moderate activity against fungi (PubMed:27351824, PubMed:30718667, PubMed:9022710). Mainly acts by causing membrane permeabilization, but is unable to forme pore-like openings (Probable). Is also able to penetrate eukaryotic cells (keratinocytes), and kill intracellular S.aureus (both wild-type and MRSA) without injuring host cells (PubMed:24514087). Shows inhibitory effect on biofilm formation of Gram-positive bacteria, but not of Gram-negative bacteria (PubMed:27351824, PubMed:28443279). Shows antiviral activity against herpes simplex virus 1 (HSV-1) by disrupting the viral envelope (PubMed:29483113). Also displays anti-leishmania activity by damaging parasite membrane (PubMed:15513914, PubMed:25668079). Does not show hemolytic activity (PubMed:15513914, PubMed:28443279, PubMed:9022710). Acts synergistically with temporin-L that improves temporin-1Tb activity by preventing its self-association in lipopolysaccharides (LPS) (PubMed:16867990, PubMed:21586570). In vitro, promotes cell migration and wound healing (PubMed:24514087).</text>
</comment>
<comment type="subunit">
    <text evidence="4 5 11 25">Homo-oligomerizes in membranes as homodimers, homotrimers, or even homotetramers (Probable). Oligomerizes in presence of LPS (PubMed:16867990, PubMed:21586570). In Gram-positive bacterial mimetic membranes, the aggregation is weakly pronounced, and penetration proceeds more rapidly and is deeper than in Gram-negative bacterial mimetic membranes where aggregation is high (PubMed:30718667). Homo-oligomerization is prevented by temporin-L (PubMed:16867990, PubMed:21586570).</text>
</comment>
<comment type="subcellular location">
    <subcellularLocation>
        <location evidence="12 13">Secreted</location>
    </subcellularLocation>
    <subcellularLocation>
        <location evidence="11">Target cell membrane</location>
    </subcellularLocation>
    <subcellularLocation>
        <location evidence="6">Target cell</location>
        <location evidence="6">Target cell cytoplasm</location>
    </subcellularLocation>
    <text evidence="1">Contact and insertion into membrane begin at the N-terminus.</text>
</comment>
<comment type="tissue specificity">
    <text evidence="26 27">Expressed by the skin glands.</text>
</comment>
<comment type="mass spectrometry" mass="1390.93" method="Electrospray" evidence="12"/>
<comment type="biotechnology">
    <text evidence="24">Has potential application in preventing device infection by S.epidermidis biofilm, since it has the ability, in combination with EDTA, to eradicate S.epidermidis biofilms on silicone catheters.</text>
</comment>
<comment type="pharmaceutical">
    <text evidence="23">Is an attractive candidate for the generation of new therapeutics to treat S.aureus-related epithelial (skin) infections. It has (i) a long-lasting existence in nature as active molecule which is able to exert a direct antimicrobial activity, which should guarantee the success of the antimicrobial efficacy of temporin-based anti-infective agents; (ii) a membrane-perturbing activity on bacteria, which should limit the induction of microbial resistance; (iii) the ability to kill both reference S.aureus and MRSA strains, once internalized by human epidermal cells and to treat them; (iv) the ability to stimulate migration of these cells; (v) a chemoattractic property for human monocytes; (vi) an exogenous (nonmammalian) nature, which should allow beneficial effects in clinical medicine, reducing the possible risk of inducing an autoimmune response; and, (vii) a small size, which should allow a low production cost.</text>
</comment>
<comment type="similarity">
    <text evidence="20">Belongs to the frog skin active peptide (FSAP) family. Temporin subfamily.</text>
</comment>
<comment type="online information" name="The antimicrobial peptide database">
    <link uri="https://wangapd3.com/database/query_output.php?ID=00095"/>
</comment>